<accession>Q54JJ3</accession>
<protein>
    <recommendedName>
        <fullName>ADP-ribosylation factor H</fullName>
    </recommendedName>
</protein>
<feature type="chain" id="PRO_0000328145" description="ADP-ribosylation factor H">
    <location>
        <begin position="1"/>
        <end position="189"/>
    </location>
</feature>
<feature type="binding site" evidence="1">
    <location>
        <begin position="34"/>
        <end position="40"/>
    </location>
    <ligand>
        <name>GTP</name>
        <dbReference type="ChEBI" id="CHEBI:37565"/>
    </ligand>
</feature>
<feature type="binding site" evidence="1">
    <location>
        <begin position="75"/>
        <end position="79"/>
    </location>
    <ligand>
        <name>GTP</name>
        <dbReference type="ChEBI" id="CHEBI:37565"/>
    </ligand>
</feature>
<feature type="binding site" evidence="1">
    <location>
        <begin position="134"/>
        <end position="137"/>
    </location>
    <ligand>
        <name>GTP</name>
        <dbReference type="ChEBI" id="CHEBI:37565"/>
    </ligand>
</feature>
<comment type="function">
    <text evidence="1">GTP-binding protein that may be involved in protein trafficking. May modulate vesicle budding and uncoating within the Golgi apparatus (By similarity).</text>
</comment>
<comment type="subcellular location">
    <subcellularLocation>
        <location evidence="1">Golgi apparatus</location>
    </subcellularLocation>
</comment>
<comment type="similarity">
    <text evidence="2">Belongs to the small GTPase superfamily. Arf family.</text>
</comment>
<dbReference type="EMBL" id="AAFI02000107">
    <property type="protein sequence ID" value="EAL63433.1"/>
    <property type="molecule type" value="Genomic_DNA"/>
</dbReference>
<dbReference type="RefSeq" id="XP_636938.1">
    <property type="nucleotide sequence ID" value="XM_631846.1"/>
</dbReference>
<dbReference type="SMR" id="Q54JJ3"/>
<dbReference type="FunCoup" id="Q54JJ3">
    <property type="interactions" value="5"/>
</dbReference>
<dbReference type="STRING" id="44689.Q54JJ3"/>
<dbReference type="PaxDb" id="44689-DDB0229367"/>
<dbReference type="EnsemblProtists" id="EAL63433">
    <property type="protein sequence ID" value="EAL63433"/>
    <property type="gene ID" value="DDB_G0288015"/>
</dbReference>
<dbReference type="GeneID" id="8626413"/>
<dbReference type="KEGG" id="ddi:DDB_G0288015"/>
<dbReference type="dictyBase" id="DDB_G0288015">
    <property type="gene designation" value="arrH"/>
</dbReference>
<dbReference type="VEuPathDB" id="AmoebaDB:DDB_G0288015"/>
<dbReference type="eggNOG" id="KOG0070">
    <property type="taxonomic scope" value="Eukaryota"/>
</dbReference>
<dbReference type="HOGENOM" id="CLU_040729_9_3_1"/>
<dbReference type="InParanoid" id="Q54JJ3"/>
<dbReference type="OMA" id="IECRTLM"/>
<dbReference type="PhylomeDB" id="Q54JJ3"/>
<dbReference type="Reactome" id="R-DDI-1660514">
    <property type="pathway name" value="Synthesis of PIPs at the Golgi membrane"/>
</dbReference>
<dbReference type="Reactome" id="R-DDI-199992">
    <property type="pathway name" value="trans-Golgi Network Vesicle Budding"/>
</dbReference>
<dbReference type="Reactome" id="R-DDI-5620916">
    <property type="pathway name" value="VxPx cargo-targeting to cilium"/>
</dbReference>
<dbReference type="Reactome" id="R-DDI-6807878">
    <property type="pathway name" value="COPI-mediated anterograde transport"/>
</dbReference>
<dbReference type="Reactome" id="R-DDI-6811434">
    <property type="pathway name" value="COPI-dependent Golgi-to-ER retrograde traffic"/>
</dbReference>
<dbReference type="Reactome" id="R-DDI-6811438">
    <property type="pathway name" value="Intra-Golgi traffic"/>
</dbReference>
<dbReference type="PRO" id="PR:Q54JJ3"/>
<dbReference type="Proteomes" id="UP000002195">
    <property type="component" value="Chromosome 5"/>
</dbReference>
<dbReference type="GO" id="GO:0005737">
    <property type="term" value="C:cytoplasm"/>
    <property type="evidence" value="ECO:0000318"/>
    <property type="project" value="GO_Central"/>
</dbReference>
<dbReference type="GO" id="GO:0005794">
    <property type="term" value="C:Golgi apparatus"/>
    <property type="evidence" value="ECO:0007669"/>
    <property type="project" value="UniProtKB-SubCell"/>
</dbReference>
<dbReference type="GO" id="GO:0005886">
    <property type="term" value="C:plasma membrane"/>
    <property type="evidence" value="ECO:0000318"/>
    <property type="project" value="GO_Central"/>
</dbReference>
<dbReference type="GO" id="GO:0005525">
    <property type="term" value="F:GTP binding"/>
    <property type="evidence" value="ECO:0000318"/>
    <property type="project" value="GO_Central"/>
</dbReference>
<dbReference type="GO" id="GO:0003924">
    <property type="term" value="F:GTPase activity"/>
    <property type="evidence" value="ECO:0007669"/>
    <property type="project" value="InterPro"/>
</dbReference>
<dbReference type="GO" id="GO:0006886">
    <property type="term" value="P:intracellular protein transport"/>
    <property type="evidence" value="ECO:0000318"/>
    <property type="project" value="GO_Central"/>
</dbReference>
<dbReference type="GO" id="GO:0016192">
    <property type="term" value="P:vesicle-mediated transport"/>
    <property type="evidence" value="ECO:0000318"/>
    <property type="project" value="GO_Central"/>
</dbReference>
<dbReference type="CDD" id="cd00878">
    <property type="entry name" value="Arf_Arl"/>
    <property type="match status" value="1"/>
</dbReference>
<dbReference type="FunFam" id="3.40.50.300:FF:000412">
    <property type="entry name" value="ADP-ribosylation factor 1"/>
    <property type="match status" value="1"/>
</dbReference>
<dbReference type="Gene3D" id="3.40.50.300">
    <property type="entry name" value="P-loop containing nucleotide triphosphate hydrolases"/>
    <property type="match status" value="1"/>
</dbReference>
<dbReference type="InterPro" id="IPR027417">
    <property type="entry name" value="P-loop_NTPase"/>
</dbReference>
<dbReference type="InterPro" id="IPR005225">
    <property type="entry name" value="Small_GTP-bd"/>
</dbReference>
<dbReference type="InterPro" id="IPR024156">
    <property type="entry name" value="Small_GTPase_ARF"/>
</dbReference>
<dbReference type="InterPro" id="IPR006689">
    <property type="entry name" value="Small_GTPase_ARF/SAR"/>
</dbReference>
<dbReference type="NCBIfam" id="TIGR00231">
    <property type="entry name" value="small_GTP"/>
    <property type="match status" value="1"/>
</dbReference>
<dbReference type="PANTHER" id="PTHR11711">
    <property type="entry name" value="ADP RIBOSYLATION FACTOR-RELATED"/>
    <property type="match status" value="1"/>
</dbReference>
<dbReference type="Pfam" id="PF00025">
    <property type="entry name" value="Arf"/>
    <property type="match status" value="1"/>
</dbReference>
<dbReference type="PRINTS" id="PR00328">
    <property type="entry name" value="SAR1GTPBP"/>
</dbReference>
<dbReference type="SMART" id="SM00177">
    <property type="entry name" value="ARF"/>
    <property type="match status" value="1"/>
</dbReference>
<dbReference type="SMART" id="SM00175">
    <property type="entry name" value="RAB"/>
    <property type="match status" value="1"/>
</dbReference>
<dbReference type="SMART" id="SM00178">
    <property type="entry name" value="SAR"/>
    <property type="match status" value="1"/>
</dbReference>
<dbReference type="SUPFAM" id="SSF52540">
    <property type="entry name" value="P-loop containing nucleoside triphosphate hydrolases"/>
    <property type="match status" value="1"/>
</dbReference>
<dbReference type="PROSITE" id="PS51417">
    <property type="entry name" value="ARF"/>
    <property type="match status" value="1"/>
</dbReference>
<keyword id="KW-0931">ER-Golgi transport</keyword>
<keyword id="KW-0333">Golgi apparatus</keyword>
<keyword id="KW-0342">GTP-binding</keyword>
<keyword id="KW-0547">Nucleotide-binding</keyword>
<keyword id="KW-0653">Protein transport</keyword>
<keyword id="KW-1185">Reference proteome</keyword>
<keyword id="KW-0813">Transport</keyword>
<name>ARFH_DICDI</name>
<proteinExistence type="inferred from homology"/>
<evidence type="ECO:0000250" key="1"/>
<evidence type="ECO:0000305" key="2"/>
<gene>
    <name type="primary">arrH</name>
    <name type="ORF">DDB_G0288015</name>
</gene>
<sequence length="189" mass="21603">MLSDFFNNLASFFSNIFSLFEGKKQTRILMIGLDGAGKSTLLYKLKLGDIVSTVPTIGFNVETIEYKNLSMTVWDVGGQYKIRALWKHYYHGTNAIIFVVDSTDRERMDEVKEEIDTLLIQEELKGIQILIFANKQDMNNAMNTSEIVDSLNLNSIKDRKWYVQPCSAIKSPHGIYEGFDWVANSLNNK</sequence>
<reference key="1">
    <citation type="journal article" date="2005" name="Nature">
        <title>The genome of the social amoeba Dictyostelium discoideum.</title>
        <authorList>
            <person name="Eichinger L."/>
            <person name="Pachebat J.A."/>
            <person name="Gloeckner G."/>
            <person name="Rajandream M.A."/>
            <person name="Sucgang R."/>
            <person name="Berriman M."/>
            <person name="Song J."/>
            <person name="Olsen R."/>
            <person name="Szafranski K."/>
            <person name="Xu Q."/>
            <person name="Tunggal B."/>
            <person name="Kummerfeld S."/>
            <person name="Madera M."/>
            <person name="Konfortov B.A."/>
            <person name="Rivero F."/>
            <person name="Bankier A.T."/>
            <person name="Lehmann R."/>
            <person name="Hamlin N."/>
            <person name="Davies R."/>
            <person name="Gaudet P."/>
            <person name="Fey P."/>
            <person name="Pilcher K."/>
            <person name="Chen G."/>
            <person name="Saunders D."/>
            <person name="Sodergren E.J."/>
            <person name="Davis P."/>
            <person name="Kerhornou A."/>
            <person name="Nie X."/>
            <person name="Hall N."/>
            <person name="Anjard C."/>
            <person name="Hemphill L."/>
            <person name="Bason N."/>
            <person name="Farbrother P."/>
            <person name="Desany B."/>
            <person name="Just E."/>
            <person name="Morio T."/>
            <person name="Rost R."/>
            <person name="Churcher C.M."/>
            <person name="Cooper J."/>
            <person name="Haydock S."/>
            <person name="van Driessche N."/>
            <person name="Cronin A."/>
            <person name="Goodhead I."/>
            <person name="Muzny D.M."/>
            <person name="Mourier T."/>
            <person name="Pain A."/>
            <person name="Lu M."/>
            <person name="Harper D."/>
            <person name="Lindsay R."/>
            <person name="Hauser H."/>
            <person name="James K.D."/>
            <person name="Quiles M."/>
            <person name="Madan Babu M."/>
            <person name="Saito T."/>
            <person name="Buchrieser C."/>
            <person name="Wardroper A."/>
            <person name="Felder M."/>
            <person name="Thangavelu M."/>
            <person name="Johnson D."/>
            <person name="Knights A."/>
            <person name="Loulseged H."/>
            <person name="Mungall K.L."/>
            <person name="Oliver K."/>
            <person name="Price C."/>
            <person name="Quail M.A."/>
            <person name="Urushihara H."/>
            <person name="Hernandez J."/>
            <person name="Rabbinowitsch E."/>
            <person name="Steffen D."/>
            <person name="Sanders M."/>
            <person name="Ma J."/>
            <person name="Kohara Y."/>
            <person name="Sharp S."/>
            <person name="Simmonds M.N."/>
            <person name="Spiegler S."/>
            <person name="Tivey A."/>
            <person name="Sugano S."/>
            <person name="White B."/>
            <person name="Walker D."/>
            <person name="Woodward J.R."/>
            <person name="Winckler T."/>
            <person name="Tanaka Y."/>
            <person name="Shaulsky G."/>
            <person name="Schleicher M."/>
            <person name="Weinstock G.M."/>
            <person name="Rosenthal A."/>
            <person name="Cox E.C."/>
            <person name="Chisholm R.L."/>
            <person name="Gibbs R.A."/>
            <person name="Loomis W.F."/>
            <person name="Platzer M."/>
            <person name="Kay R.R."/>
            <person name="Williams J.G."/>
            <person name="Dear P.H."/>
            <person name="Noegel A.A."/>
            <person name="Barrell B.G."/>
            <person name="Kuspa A."/>
        </authorList>
    </citation>
    <scope>NUCLEOTIDE SEQUENCE [LARGE SCALE GENOMIC DNA]</scope>
    <source>
        <strain>AX4</strain>
    </source>
</reference>
<organism>
    <name type="scientific">Dictyostelium discoideum</name>
    <name type="common">Social amoeba</name>
    <dbReference type="NCBI Taxonomy" id="44689"/>
    <lineage>
        <taxon>Eukaryota</taxon>
        <taxon>Amoebozoa</taxon>
        <taxon>Evosea</taxon>
        <taxon>Eumycetozoa</taxon>
        <taxon>Dictyostelia</taxon>
        <taxon>Dictyosteliales</taxon>
        <taxon>Dictyosteliaceae</taxon>
        <taxon>Dictyostelium</taxon>
    </lineage>
</organism>